<evidence type="ECO:0000250" key="1">
    <source>
        <dbReference type="UniProtKB" id="P38244"/>
    </source>
</evidence>
<evidence type="ECO:0000250" key="2">
    <source>
        <dbReference type="UniProtKB" id="P80561"/>
    </source>
</evidence>
<evidence type="ECO:0000255" key="3"/>
<evidence type="ECO:0000255" key="4">
    <source>
        <dbReference type="PROSITE-ProRule" id="PRU00498"/>
    </source>
</evidence>
<evidence type="ECO:0000305" key="5"/>
<proteinExistence type="inferred from homology"/>
<sequence length="837" mass="93732">MSEEEVHDTSSEASEVFTNQPNAFVRGVRSIFGYRKTSLTLFVILTIVVTAGLSFYDNSLELTIELPTSQLEKEILESSWLDLQNIARYPHTYGSRANDQVHDYLEEIIQDMEYDNDGEKIMFESGKGVVSYYESNNLLVRVNGSDGTLPALLLSAHYDSVPSSFGVTDDGMGVASLLGVLRFVAHNQPRRTIIFNFNNNEEFGLFGAHAFVKHPWFKQVGYFLNLEGTGAGGKAVLFRGTDYGIVKNFGGVRYPYATSIFQQGFNNHVIHSETDYKVYKEAGLRGLDLAFYKPRDKYHTGEDNIRNVSPKSLWHMMSNAIDFVQMGVVDDSEEPAVYTTFLGYFFATPISALARVNLVLLVLFPVVSTPLLFVIVKYKKWKLRVTNFLGVPLAMGLAVAVGQVGNPMLVSSHPMMVVATTTSIVVLVYYVVLNGVDWVNTSSDQKLVTMIEVSFVYWVVLVYVTWSGGDHTGEFGVTVLFFVQASTSLLGLIGWTFTRVRGGDEPLLSGEEERYGTEDERDTEKPLVEHNYDWSLQYLLIVPVSSLVVYNSGWLVLEGVNKTVQESLASEHLIYWIVVVFSQFLVLPVVPFITKFNRYIVLGLSVVAVVGVLMSMAVHPFNQGSPMKLRFIERVGQNDMVEVYGRQGFVEDVLSDLPSVKQTQAKLECEALPDGLEVCKYKSGLTPGNLTVEVTTEPRAESYGLISGAITIAAPENRMCTVHFPPDRVKAVVVGKFGNNFKAIPDGFSREKGNYIYKDRNGISQLELYKLDWNKDYHVGFEWLPDIDDEGGMRVEVECFWGDMVPAYQEVVHYSPNWVTWANKERGLVGVVKHVDV</sequence>
<protein>
    <recommendedName>
        <fullName evidence="1">Vacuolar membrane protease</fullName>
        <ecNumber evidence="5">3.4.-.-</ecNumber>
    </recommendedName>
    <alternativeName>
        <fullName evidence="1">FXNA-related family protease 1</fullName>
    </alternativeName>
</protein>
<feature type="chain" id="PRO_0000411706" description="Vacuolar membrane protease">
    <location>
        <begin position="1"/>
        <end position="837"/>
    </location>
</feature>
<feature type="topological domain" description="Cytoplasmic" evidence="1">
    <location>
        <begin position="1"/>
        <end position="36"/>
    </location>
</feature>
<feature type="transmembrane region" description="Helical; Name=1" evidence="3">
    <location>
        <begin position="37"/>
        <end position="57"/>
    </location>
</feature>
<feature type="topological domain" description="Vacuolar" evidence="1">
    <location>
        <begin position="58"/>
        <end position="355"/>
    </location>
</feature>
<feature type="transmembrane region" description="Helical; Name=2" evidence="3">
    <location>
        <begin position="356"/>
        <end position="376"/>
    </location>
</feature>
<feature type="topological domain" description="Cytoplasmic" evidence="1">
    <location>
        <begin position="377"/>
        <end position="384"/>
    </location>
</feature>
<feature type="transmembrane region" description="Helical; Name=3" evidence="3">
    <location>
        <begin position="385"/>
        <end position="405"/>
    </location>
</feature>
<feature type="topological domain" description="Vacuolar" evidence="1">
    <location>
        <begin position="406"/>
        <end position="415"/>
    </location>
</feature>
<feature type="transmembrane region" description="Helical; Name=4" evidence="3">
    <location>
        <begin position="416"/>
        <end position="436"/>
    </location>
</feature>
<feature type="topological domain" description="Cytoplasmic" evidence="1">
    <location>
        <begin position="437"/>
        <end position="446"/>
    </location>
</feature>
<feature type="transmembrane region" description="Helical; Name=5" evidence="3">
    <location>
        <begin position="447"/>
        <end position="467"/>
    </location>
</feature>
<feature type="topological domain" description="Vacuolar" evidence="1">
    <location>
        <begin position="468"/>
        <end position="474"/>
    </location>
</feature>
<feature type="transmembrane region" description="Helical; Name=6" evidence="3">
    <location>
        <begin position="475"/>
        <end position="495"/>
    </location>
</feature>
<feature type="topological domain" description="Cytoplasmic" evidence="1">
    <location>
        <begin position="496"/>
        <end position="539"/>
    </location>
</feature>
<feature type="transmembrane region" description="Helical; Name=7" evidence="3">
    <location>
        <begin position="540"/>
        <end position="560"/>
    </location>
</feature>
<feature type="topological domain" description="Vacuolar" evidence="1">
    <location>
        <begin position="561"/>
        <end position="572"/>
    </location>
</feature>
<feature type="transmembrane region" description="Helical; Name=8" evidence="3">
    <location>
        <begin position="573"/>
        <end position="593"/>
    </location>
</feature>
<feature type="topological domain" description="Cytoplasmic" evidence="1 5">
    <location>
        <begin position="594"/>
        <end position="598"/>
    </location>
</feature>
<feature type="transmembrane region" description="Helical; Name=9" evidence="3">
    <location>
        <begin position="599"/>
        <end position="619"/>
    </location>
</feature>
<feature type="topological domain" description="Vacuolar" evidence="1 5">
    <location>
        <begin position="620"/>
        <end position="837"/>
    </location>
</feature>
<feature type="active site" description="Proton acceptor" evidence="2">
    <location>
        <position position="201"/>
    </location>
</feature>
<feature type="binding site" evidence="2">
    <location>
        <position position="157"/>
    </location>
    <ligand>
        <name>Zn(2+)</name>
        <dbReference type="ChEBI" id="CHEBI:29105"/>
        <label>1</label>
        <note>catalytic</note>
    </ligand>
</feature>
<feature type="binding site" evidence="2">
    <location>
        <position position="169"/>
    </location>
    <ligand>
        <name>Zn(2+)</name>
        <dbReference type="ChEBI" id="CHEBI:29105"/>
        <label>1</label>
        <note>catalytic</note>
    </ligand>
</feature>
<feature type="binding site" evidence="2">
    <location>
        <position position="169"/>
    </location>
    <ligand>
        <name>Zn(2+)</name>
        <dbReference type="ChEBI" id="CHEBI:29105"/>
        <label>2</label>
        <note>catalytic</note>
    </ligand>
</feature>
<feature type="binding site" evidence="2">
    <location>
        <position position="202"/>
    </location>
    <ligand>
        <name>Zn(2+)</name>
        <dbReference type="ChEBI" id="CHEBI:29105"/>
        <label>2</label>
        <note>catalytic</note>
    </ligand>
</feature>
<feature type="binding site" evidence="2">
    <location>
        <position position="227"/>
    </location>
    <ligand>
        <name>Zn(2+)</name>
        <dbReference type="ChEBI" id="CHEBI:29105"/>
        <label>1</label>
        <note>catalytic</note>
    </ligand>
</feature>
<feature type="binding site" evidence="2">
    <location>
        <position position="299"/>
    </location>
    <ligand>
        <name>Zn(2+)</name>
        <dbReference type="ChEBI" id="CHEBI:29105"/>
        <label>2</label>
        <note>catalytic</note>
    </ligand>
</feature>
<feature type="site" description="Transition state stabilizer" evidence="2">
    <location>
        <position position="298"/>
    </location>
</feature>
<feature type="glycosylation site" description="N-linked (GlcNAc...) asparagine" evidence="4">
    <location>
        <position position="143"/>
    </location>
</feature>
<feature type="glycosylation site" description="N-linked (GlcNAc...) asparagine" evidence="4">
    <location>
        <position position="561"/>
    </location>
</feature>
<feature type="glycosylation site" description="N-linked (GlcNAc...) asparagine" evidence="4">
    <location>
        <position position="689"/>
    </location>
</feature>
<dbReference type="EC" id="3.4.-.-" evidence="5"/>
<dbReference type="EMBL" id="CM000312">
    <property type="protein sequence ID" value="EEQ46562.1"/>
    <property type="molecule type" value="Genomic_DNA"/>
</dbReference>
<dbReference type="SMR" id="C4YS59"/>
<dbReference type="PaxDb" id="5476-C4YS59"/>
<dbReference type="VEuPathDB" id="FungiDB:CAWG_04918"/>
<dbReference type="HOGENOM" id="CLU_006412_1_0_1"/>
<dbReference type="OMA" id="TPWPVTI"/>
<dbReference type="OrthoDB" id="20442at766764"/>
<dbReference type="Proteomes" id="UP000001429">
    <property type="component" value="Chromosome 6"/>
</dbReference>
<dbReference type="GO" id="GO:0005774">
    <property type="term" value="C:vacuolar membrane"/>
    <property type="evidence" value="ECO:0007669"/>
    <property type="project" value="UniProtKB-SubCell"/>
</dbReference>
<dbReference type="GO" id="GO:0046872">
    <property type="term" value="F:metal ion binding"/>
    <property type="evidence" value="ECO:0007669"/>
    <property type="project" value="UniProtKB-KW"/>
</dbReference>
<dbReference type="GO" id="GO:0008235">
    <property type="term" value="F:metalloexopeptidase activity"/>
    <property type="evidence" value="ECO:0007669"/>
    <property type="project" value="InterPro"/>
</dbReference>
<dbReference type="GO" id="GO:0006508">
    <property type="term" value="P:proteolysis"/>
    <property type="evidence" value="ECO:0007669"/>
    <property type="project" value="UniProtKB-KW"/>
</dbReference>
<dbReference type="CDD" id="cd03875">
    <property type="entry name" value="M28_Fxna_like"/>
    <property type="match status" value="1"/>
</dbReference>
<dbReference type="Gene3D" id="3.40.630.10">
    <property type="entry name" value="Zn peptidases"/>
    <property type="match status" value="1"/>
</dbReference>
<dbReference type="InterPro" id="IPR048024">
    <property type="entry name" value="Fxna-like_M28_dom"/>
</dbReference>
<dbReference type="InterPro" id="IPR045175">
    <property type="entry name" value="M28_fam"/>
</dbReference>
<dbReference type="InterPro" id="IPR007484">
    <property type="entry name" value="Peptidase_M28"/>
</dbReference>
<dbReference type="InterPro" id="IPR053975">
    <property type="entry name" value="PFF1_C"/>
</dbReference>
<dbReference type="InterPro" id="IPR053976">
    <property type="entry name" value="PFF1_TM"/>
</dbReference>
<dbReference type="PANTHER" id="PTHR12147">
    <property type="entry name" value="METALLOPEPTIDASE M28 FAMILY MEMBER"/>
    <property type="match status" value="1"/>
</dbReference>
<dbReference type="PANTHER" id="PTHR12147:SF58">
    <property type="entry name" value="VACUOLAR MEMBRANE PROTEASE"/>
    <property type="match status" value="1"/>
</dbReference>
<dbReference type="Pfam" id="PF04389">
    <property type="entry name" value="Peptidase_M28"/>
    <property type="match status" value="1"/>
</dbReference>
<dbReference type="Pfam" id="PF22250">
    <property type="entry name" value="PFF1_C"/>
    <property type="match status" value="1"/>
</dbReference>
<dbReference type="Pfam" id="PF22251">
    <property type="entry name" value="PFF1_TM"/>
    <property type="match status" value="2"/>
</dbReference>
<dbReference type="SUPFAM" id="SSF53187">
    <property type="entry name" value="Zn-dependent exopeptidases"/>
    <property type="match status" value="1"/>
</dbReference>
<keyword id="KW-0325">Glycoprotein</keyword>
<keyword id="KW-0378">Hydrolase</keyword>
<keyword id="KW-0472">Membrane</keyword>
<keyword id="KW-0479">Metal-binding</keyword>
<keyword id="KW-0482">Metalloprotease</keyword>
<keyword id="KW-0645">Protease</keyword>
<keyword id="KW-0812">Transmembrane</keyword>
<keyword id="KW-1133">Transmembrane helix</keyword>
<keyword id="KW-0926">Vacuole</keyword>
<keyword id="KW-0862">Zinc</keyword>
<reference key="1">
    <citation type="journal article" date="2009" name="Nature">
        <title>Evolution of pathogenicity and sexual reproduction in eight Candida genomes.</title>
        <authorList>
            <person name="Butler G."/>
            <person name="Rasmussen M.D."/>
            <person name="Lin M.F."/>
            <person name="Santos M.A.S."/>
            <person name="Sakthikumar S."/>
            <person name="Munro C.A."/>
            <person name="Rheinbay E."/>
            <person name="Grabherr M."/>
            <person name="Forche A."/>
            <person name="Reedy J.L."/>
            <person name="Agrafioti I."/>
            <person name="Arnaud M.B."/>
            <person name="Bates S."/>
            <person name="Brown A.J.P."/>
            <person name="Brunke S."/>
            <person name="Costanzo M.C."/>
            <person name="Fitzpatrick D.A."/>
            <person name="de Groot P.W.J."/>
            <person name="Harris D."/>
            <person name="Hoyer L.L."/>
            <person name="Hube B."/>
            <person name="Klis F.M."/>
            <person name="Kodira C."/>
            <person name="Lennard N."/>
            <person name="Logue M.E."/>
            <person name="Martin R."/>
            <person name="Neiman A.M."/>
            <person name="Nikolaou E."/>
            <person name="Quail M.A."/>
            <person name="Quinn J."/>
            <person name="Santos M.C."/>
            <person name="Schmitzberger F.F."/>
            <person name="Sherlock G."/>
            <person name="Shah P."/>
            <person name="Silverstein K.A.T."/>
            <person name="Skrzypek M.S."/>
            <person name="Soll D."/>
            <person name="Staggs R."/>
            <person name="Stansfield I."/>
            <person name="Stumpf M.P.H."/>
            <person name="Sudbery P.E."/>
            <person name="Srikantha T."/>
            <person name="Zeng Q."/>
            <person name="Berman J."/>
            <person name="Berriman M."/>
            <person name="Heitman J."/>
            <person name="Gow N.A.R."/>
            <person name="Lorenz M.C."/>
            <person name="Birren B.W."/>
            <person name="Kellis M."/>
            <person name="Cuomo C.A."/>
        </authorList>
    </citation>
    <scope>NUCLEOTIDE SEQUENCE [LARGE SCALE GENOMIC DNA]</scope>
    <source>
        <strain>WO-1</strain>
    </source>
</reference>
<organism>
    <name type="scientific">Candida albicans (strain WO-1)</name>
    <name type="common">Yeast</name>
    <dbReference type="NCBI Taxonomy" id="294748"/>
    <lineage>
        <taxon>Eukaryota</taxon>
        <taxon>Fungi</taxon>
        <taxon>Dikarya</taxon>
        <taxon>Ascomycota</taxon>
        <taxon>Saccharomycotina</taxon>
        <taxon>Pichiomycetes</taxon>
        <taxon>Debaryomycetaceae</taxon>
        <taxon>Candida/Lodderomyces clade</taxon>
        <taxon>Candida</taxon>
    </lineage>
</organism>
<accession>C4YS59</accession>
<name>PFF1_CANAW</name>
<comment type="function">
    <text evidence="1">May be involved in vacuolar sorting and osmoregulation.</text>
</comment>
<comment type="cofactor">
    <cofactor evidence="2">
        <name>Zn(2+)</name>
        <dbReference type="ChEBI" id="CHEBI:29105"/>
    </cofactor>
    <text evidence="2">Binds 2 Zn(2+) ions per subunit.</text>
</comment>
<comment type="subcellular location">
    <subcellularLocation>
        <location evidence="1">Vacuole membrane</location>
        <topology evidence="3">Multi-pass membrane protein</topology>
    </subcellularLocation>
</comment>
<comment type="similarity">
    <text evidence="5">Belongs to the peptidase M28 family.</text>
</comment>
<gene>
    <name type="ORF">CAWG_04918</name>
</gene>